<proteinExistence type="inferred from homology"/>
<feature type="chain" id="PRO_1000069680" description="Thymidine phosphorylase">
    <location>
        <begin position="1"/>
        <end position="440"/>
    </location>
</feature>
<sequence length="440" mass="46887">MFLAQEIIRKKRDGQPLSEEEIRFFINGIRDNVVSEGQIAALAMTIYFHDMSMPERVALTMAMRDSGTVLNWKSLNLNGPLVDKHSTGGVGDVTSLMLGPMVAACGGYVPMISGRGLGHTGGTLDKLEAIPGFDIFPDDNAFRKIIQNVGVAIIGQTSSLAPADKRFYATRDITATVDSIPLITASILAKKLAEGLDALVMDVKVGSGAFMPTYSLSADLAQAIVGVANGAGCKTTALLTDMNQVLASSAGNGVEVREAVRFLTGEYRNPRLLEVTMALCVEMLLSGGLAHDEADARAKLQAVLDNGKAAEVFGRMVAAQKGPVDFVERYDSYLPVATLSKPVFAEQTGIITAMDTRALGMAVVALGGGRRRATDPIDYSVGLTEMARLGTRVDGQQPLAVIHANNEDDWQQAAEAVRAAITLGNNAPEETPVIYRRITE</sequence>
<name>TYPH_YERP3</name>
<protein>
    <recommendedName>
        <fullName evidence="1">Thymidine phosphorylase</fullName>
        <ecNumber evidence="1">2.4.2.4</ecNumber>
    </recommendedName>
    <alternativeName>
        <fullName evidence="1">TdRPase</fullName>
    </alternativeName>
</protein>
<dbReference type="EC" id="2.4.2.4" evidence="1"/>
<dbReference type="EMBL" id="CP000720">
    <property type="protein sequence ID" value="ABS45942.1"/>
    <property type="molecule type" value="Genomic_DNA"/>
</dbReference>
<dbReference type="RefSeq" id="WP_011191687.1">
    <property type="nucleotide sequence ID" value="NC_009708.1"/>
</dbReference>
<dbReference type="SMR" id="A7FMH4"/>
<dbReference type="GeneID" id="49787418"/>
<dbReference type="KEGG" id="ypi:YpsIP31758_3497"/>
<dbReference type="HOGENOM" id="CLU_025040_0_1_6"/>
<dbReference type="UniPathway" id="UPA00578">
    <property type="reaction ID" value="UER00638"/>
</dbReference>
<dbReference type="Proteomes" id="UP000002412">
    <property type="component" value="Chromosome"/>
</dbReference>
<dbReference type="GO" id="GO:0005829">
    <property type="term" value="C:cytosol"/>
    <property type="evidence" value="ECO:0007669"/>
    <property type="project" value="TreeGrafter"/>
</dbReference>
<dbReference type="GO" id="GO:0004645">
    <property type="term" value="F:1,4-alpha-oligoglucan phosphorylase activity"/>
    <property type="evidence" value="ECO:0007669"/>
    <property type="project" value="InterPro"/>
</dbReference>
<dbReference type="GO" id="GO:0009032">
    <property type="term" value="F:thymidine phosphorylase activity"/>
    <property type="evidence" value="ECO:0007669"/>
    <property type="project" value="UniProtKB-UniRule"/>
</dbReference>
<dbReference type="GO" id="GO:0006206">
    <property type="term" value="P:pyrimidine nucleobase metabolic process"/>
    <property type="evidence" value="ECO:0007669"/>
    <property type="project" value="InterPro"/>
</dbReference>
<dbReference type="GO" id="GO:0046104">
    <property type="term" value="P:thymidine metabolic process"/>
    <property type="evidence" value="ECO:0007669"/>
    <property type="project" value="UniProtKB-UniRule"/>
</dbReference>
<dbReference type="FunFam" id="3.40.1030.10:FF:000001">
    <property type="entry name" value="Thymidine phosphorylase"/>
    <property type="match status" value="1"/>
</dbReference>
<dbReference type="FunFam" id="3.90.1170.30:FF:000001">
    <property type="entry name" value="Thymidine phosphorylase"/>
    <property type="match status" value="1"/>
</dbReference>
<dbReference type="Gene3D" id="3.40.1030.10">
    <property type="entry name" value="Nucleoside phosphorylase/phosphoribosyltransferase catalytic domain"/>
    <property type="match status" value="1"/>
</dbReference>
<dbReference type="Gene3D" id="3.90.1170.30">
    <property type="entry name" value="Pyrimidine nucleoside phosphorylase-like, C-terminal domain"/>
    <property type="match status" value="1"/>
</dbReference>
<dbReference type="Gene3D" id="1.20.970.10">
    <property type="entry name" value="Transferase, Pyrimidine Nucleoside Phosphorylase, Chain C"/>
    <property type="match status" value="1"/>
</dbReference>
<dbReference type="HAMAP" id="MF_01628">
    <property type="entry name" value="Thymid_phosp"/>
    <property type="match status" value="1"/>
</dbReference>
<dbReference type="InterPro" id="IPR000312">
    <property type="entry name" value="Glycosyl_Trfase_fam3"/>
</dbReference>
<dbReference type="InterPro" id="IPR017459">
    <property type="entry name" value="Glycosyl_Trfase_fam3_N_dom"/>
</dbReference>
<dbReference type="InterPro" id="IPR036320">
    <property type="entry name" value="Glycosyl_Trfase_fam3_N_dom_sf"/>
</dbReference>
<dbReference type="InterPro" id="IPR035902">
    <property type="entry name" value="Nuc_phospho_transferase"/>
</dbReference>
<dbReference type="InterPro" id="IPR036566">
    <property type="entry name" value="PYNP-like_C_sf"/>
</dbReference>
<dbReference type="InterPro" id="IPR013102">
    <property type="entry name" value="PYNP_C"/>
</dbReference>
<dbReference type="InterPro" id="IPR018090">
    <property type="entry name" value="Pyrmidine_PPas_bac/euk"/>
</dbReference>
<dbReference type="InterPro" id="IPR017872">
    <property type="entry name" value="Pyrmidine_PPase_CS"/>
</dbReference>
<dbReference type="InterPro" id="IPR000053">
    <property type="entry name" value="Thymidine/pyrmidine_PPase"/>
</dbReference>
<dbReference type="InterPro" id="IPR013465">
    <property type="entry name" value="Thymidine_Pase"/>
</dbReference>
<dbReference type="NCBIfam" id="NF004490">
    <property type="entry name" value="PRK05820.1"/>
    <property type="match status" value="1"/>
</dbReference>
<dbReference type="NCBIfam" id="TIGR02643">
    <property type="entry name" value="T_phosphoryl"/>
    <property type="match status" value="1"/>
</dbReference>
<dbReference type="NCBIfam" id="TIGR02644">
    <property type="entry name" value="Y_phosphoryl"/>
    <property type="match status" value="1"/>
</dbReference>
<dbReference type="PANTHER" id="PTHR10515">
    <property type="entry name" value="THYMIDINE PHOSPHORYLASE"/>
    <property type="match status" value="1"/>
</dbReference>
<dbReference type="PANTHER" id="PTHR10515:SF0">
    <property type="entry name" value="THYMIDINE PHOSPHORYLASE"/>
    <property type="match status" value="1"/>
</dbReference>
<dbReference type="Pfam" id="PF02885">
    <property type="entry name" value="Glycos_trans_3N"/>
    <property type="match status" value="1"/>
</dbReference>
<dbReference type="Pfam" id="PF00591">
    <property type="entry name" value="Glycos_transf_3"/>
    <property type="match status" value="1"/>
</dbReference>
<dbReference type="Pfam" id="PF07831">
    <property type="entry name" value="PYNP_C"/>
    <property type="match status" value="1"/>
</dbReference>
<dbReference type="PIRSF" id="PIRSF000478">
    <property type="entry name" value="TP_PyNP"/>
    <property type="match status" value="1"/>
</dbReference>
<dbReference type="SMART" id="SM00941">
    <property type="entry name" value="PYNP_C"/>
    <property type="match status" value="1"/>
</dbReference>
<dbReference type="SUPFAM" id="SSF52418">
    <property type="entry name" value="Nucleoside phosphorylase/phosphoribosyltransferase catalytic domain"/>
    <property type="match status" value="1"/>
</dbReference>
<dbReference type="SUPFAM" id="SSF47648">
    <property type="entry name" value="Nucleoside phosphorylase/phosphoribosyltransferase N-terminal domain"/>
    <property type="match status" value="1"/>
</dbReference>
<dbReference type="SUPFAM" id="SSF54680">
    <property type="entry name" value="Pyrimidine nucleoside phosphorylase C-terminal domain"/>
    <property type="match status" value="1"/>
</dbReference>
<dbReference type="PROSITE" id="PS00647">
    <property type="entry name" value="THYMID_PHOSPHORYLASE"/>
    <property type="match status" value="1"/>
</dbReference>
<gene>
    <name evidence="1" type="primary">deoA</name>
    <name type="ordered locus">YpsIP31758_3497</name>
</gene>
<accession>A7FMH4</accession>
<keyword id="KW-0328">Glycosyltransferase</keyword>
<keyword id="KW-0808">Transferase</keyword>
<evidence type="ECO:0000255" key="1">
    <source>
        <dbReference type="HAMAP-Rule" id="MF_01628"/>
    </source>
</evidence>
<reference key="1">
    <citation type="journal article" date="2007" name="PLoS Genet.">
        <title>The complete genome sequence of Yersinia pseudotuberculosis IP31758, the causative agent of Far East scarlet-like fever.</title>
        <authorList>
            <person name="Eppinger M."/>
            <person name="Rosovitz M.J."/>
            <person name="Fricke W.F."/>
            <person name="Rasko D.A."/>
            <person name="Kokorina G."/>
            <person name="Fayolle C."/>
            <person name="Lindler L.E."/>
            <person name="Carniel E."/>
            <person name="Ravel J."/>
        </authorList>
    </citation>
    <scope>NUCLEOTIDE SEQUENCE [LARGE SCALE GENOMIC DNA]</scope>
    <source>
        <strain>IP 31758</strain>
    </source>
</reference>
<organism>
    <name type="scientific">Yersinia pseudotuberculosis serotype O:1b (strain IP 31758)</name>
    <dbReference type="NCBI Taxonomy" id="349747"/>
    <lineage>
        <taxon>Bacteria</taxon>
        <taxon>Pseudomonadati</taxon>
        <taxon>Pseudomonadota</taxon>
        <taxon>Gammaproteobacteria</taxon>
        <taxon>Enterobacterales</taxon>
        <taxon>Yersiniaceae</taxon>
        <taxon>Yersinia</taxon>
    </lineage>
</organism>
<comment type="function">
    <text evidence="1">The enzymes which catalyze the reversible phosphorolysis of pyrimidine nucleosides are involved in the degradation of these compounds and in their utilization as carbon and energy sources, or in the rescue of pyrimidine bases for nucleotide synthesis.</text>
</comment>
<comment type="catalytic activity">
    <reaction evidence="1">
        <text>thymidine + phosphate = 2-deoxy-alpha-D-ribose 1-phosphate + thymine</text>
        <dbReference type="Rhea" id="RHEA:16037"/>
        <dbReference type="ChEBI" id="CHEBI:17748"/>
        <dbReference type="ChEBI" id="CHEBI:17821"/>
        <dbReference type="ChEBI" id="CHEBI:43474"/>
        <dbReference type="ChEBI" id="CHEBI:57259"/>
        <dbReference type="EC" id="2.4.2.4"/>
    </reaction>
</comment>
<comment type="pathway">
    <text evidence="1">Pyrimidine metabolism; dTMP biosynthesis via salvage pathway; dTMP from thymine: step 1/2.</text>
</comment>
<comment type="subunit">
    <text evidence="1">Homodimer.</text>
</comment>
<comment type="similarity">
    <text evidence="1">Belongs to the thymidine/pyrimidine-nucleoside phosphorylase family.</text>
</comment>